<feature type="chain" id="PRO_0000334487" description="Na(+)/H(+) antiporter NhaA 3">
    <location>
        <begin position="1"/>
        <end position="652"/>
    </location>
</feature>
<feature type="transmembrane region" description="Helical" evidence="1">
    <location>
        <begin position="32"/>
        <end position="52"/>
    </location>
</feature>
<feature type="transmembrane region" description="Helical" evidence="1">
    <location>
        <begin position="78"/>
        <end position="98"/>
    </location>
</feature>
<feature type="transmembrane region" description="Helical" evidence="1">
    <location>
        <begin position="114"/>
        <end position="134"/>
    </location>
</feature>
<feature type="transmembrane region" description="Helical" evidence="1">
    <location>
        <begin position="142"/>
        <end position="162"/>
    </location>
</feature>
<feature type="transmembrane region" description="Helical" evidence="1">
    <location>
        <begin position="173"/>
        <end position="193"/>
    </location>
</feature>
<feature type="transmembrane region" description="Helical" evidence="1">
    <location>
        <begin position="200"/>
        <end position="220"/>
    </location>
</feature>
<feature type="transmembrane region" description="Helical" evidence="1">
    <location>
        <begin position="227"/>
        <end position="249"/>
    </location>
</feature>
<feature type="transmembrane region" description="Helical" evidence="1">
    <location>
        <begin position="306"/>
        <end position="326"/>
    </location>
</feature>
<feature type="transmembrane region" description="Helical" evidence="1">
    <location>
        <begin position="342"/>
        <end position="362"/>
    </location>
</feature>
<feature type="transmembrane region" description="Helical" evidence="1">
    <location>
        <begin position="376"/>
        <end position="396"/>
    </location>
</feature>
<feature type="transmembrane region" description="Helical" evidence="1">
    <location>
        <begin position="411"/>
        <end position="431"/>
    </location>
</feature>
<feature type="domain" description="Thioredoxin">
    <location>
        <begin position="429"/>
        <end position="623"/>
    </location>
</feature>
<feature type="region of interest" description="Na(+)/H(+) antiporter NhaA">
    <location>
        <begin position="1"/>
        <end position="428"/>
    </location>
</feature>
<feature type="region of interest" description="Disordered" evidence="2">
    <location>
        <begin position="626"/>
        <end position="652"/>
    </location>
</feature>
<feature type="compositionally biased region" description="Basic and acidic residues" evidence="2">
    <location>
        <begin position="627"/>
        <end position="641"/>
    </location>
</feature>
<evidence type="ECO:0000255" key="1">
    <source>
        <dbReference type="HAMAP-Rule" id="MF_01844"/>
    </source>
</evidence>
<evidence type="ECO:0000256" key="2">
    <source>
        <dbReference type="SAM" id="MobiDB-lite"/>
    </source>
</evidence>
<evidence type="ECO:0000305" key="3"/>
<keyword id="KW-0050">Antiport</keyword>
<keyword id="KW-1003">Cell membrane</keyword>
<keyword id="KW-0406">Ion transport</keyword>
<keyword id="KW-0472">Membrane</keyword>
<keyword id="KW-1185">Reference proteome</keyword>
<keyword id="KW-0915">Sodium</keyword>
<keyword id="KW-0739">Sodium transport</keyword>
<keyword id="KW-0812">Transmembrane</keyword>
<keyword id="KW-1133">Transmembrane helix</keyword>
<keyword id="KW-0813">Transport</keyword>
<sequence length="652" mass="70790">MTGEIPRGRRWSARTTRASRLNSPLRAFLHTETGSARVLLAAAVVALAWVNLDESSYESLWGAVFSVRLGSWQVSHDLRFWVNSGLMTFFFLVIGLEVRRDFDLGELRERRRLMLPLLAGIGGILAPIAIYLAFNAGKPTAVGWGVVMATDTALALGMLAVLGPRFSDRLRNFLLTVAVVDDLIVIVVLAIAYPEHPSPMALFVAAGIFALVLLIRAAGVRWGPGYLLLGVAAWLAVSESGVDPVVVGLVMGLFTYAYVPARTELQRAADRFRLFREQPSPQLARSVRAGLASALSPNDRLQHIYHPWASYLIVPLFALANVGVVVDRELLARAATSPVTLGVLFAYVVGKPAGIVIASMLVPRLSHNQFRAPVGWAAIIGVGTVSGIGFTIALLIATHALHGPALDEAKVGILVATVGASLTTWLVFRLAARLAPARRARALLGASEGIIDLMVPVDPDRDHVRGPREAPVTVVEYADFECPYCGQAEPAVRELLVDYTSVRYVWRHLPLTDVHPYAQMAAEAAEAAAEQGAFWEMHDLLLAHQDELRPADLLRYAERLDLDLDRFREHLADRRGAGRIAQDVDAADLSSVSGTPTFFVNGRRHHGPYNIEALSAAVMSAFASARLRPEGGREPDHRSEAGSEQPDEEPGT</sequence>
<organism>
    <name type="scientific">Salinispora tropica (strain ATCC BAA-916 / DSM 44818 / JCM 13857 / NBRC 105044 / CNB-440)</name>
    <dbReference type="NCBI Taxonomy" id="369723"/>
    <lineage>
        <taxon>Bacteria</taxon>
        <taxon>Bacillati</taxon>
        <taxon>Actinomycetota</taxon>
        <taxon>Actinomycetes</taxon>
        <taxon>Micromonosporales</taxon>
        <taxon>Micromonosporaceae</taxon>
        <taxon>Salinispora</taxon>
    </lineage>
</organism>
<reference key="1">
    <citation type="journal article" date="2007" name="Proc. Natl. Acad. Sci. U.S.A.">
        <title>Genome sequencing reveals complex secondary metabolome in the marine actinomycete Salinispora tropica.</title>
        <authorList>
            <person name="Udwary D.W."/>
            <person name="Zeigler L."/>
            <person name="Asolkar R.N."/>
            <person name="Singan V."/>
            <person name="Lapidus A."/>
            <person name="Fenical W."/>
            <person name="Jensen P.R."/>
            <person name="Moore B.S."/>
        </authorList>
    </citation>
    <scope>NUCLEOTIDE SEQUENCE [LARGE SCALE GENOMIC DNA]</scope>
    <source>
        <strain>ATCC BAA-916 / DSM 44818 / JCM 13857 / NBRC 105044 / CNB-440</strain>
    </source>
</reference>
<accession>A4X5I0</accession>
<name>NHAA3_SALTO</name>
<protein>
    <recommendedName>
        <fullName evidence="1">Na(+)/H(+) antiporter NhaA 3</fullName>
    </recommendedName>
    <alternativeName>
        <fullName evidence="1">Sodium/proton antiporter NhaA 3</fullName>
    </alternativeName>
</protein>
<gene>
    <name evidence="1" type="primary">nhaA3</name>
    <name type="ordered locus">Strop_1666</name>
</gene>
<dbReference type="EMBL" id="CP000667">
    <property type="protein sequence ID" value="ABP54130.1"/>
    <property type="molecule type" value="Genomic_DNA"/>
</dbReference>
<dbReference type="RefSeq" id="WP_011905561.1">
    <property type="nucleotide sequence ID" value="NC_009380.1"/>
</dbReference>
<dbReference type="SMR" id="A4X5I0"/>
<dbReference type="STRING" id="369723.Strop_1666"/>
<dbReference type="KEGG" id="stp:Strop_1666"/>
<dbReference type="PATRIC" id="fig|369723.5.peg.1709"/>
<dbReference type="eggNOG" id="COG1651">
    <property type="taxonomic scope" value="Bacteria"/>
</dbReference>
<dbReference type="eggNOG" id="COG3004">
    <property type="taxonomic scope" value="Bacteria"/>
</dbReference>
<dbReference type="HOGENOM" id="CLU_015803_3_0_11"/>
<dbReference type="Proteomes" id="UP000000235">
    <property type="component" value="Chromosome"/>
</dbReference>
<dbReference type="GO" id="GO:0005886">
    <property type="term" value="C:plasma membrane"/>
    <property type="evidence" value="ECO:0007669"/>
    <property type="project" value="UniProtKB-SubCell"/>
</dbReference>
<dbReference type="GO" id="GO:0015385">
    <property type="term" value="F:sodium:proton antiporter activity"/>
    <property type="evidence" value="ECO:0007669"/>
    <property type="project" value="TreeGrafter"/>
</dbReference>
<dbReference type="GO" id="GO:0006885">
    <property type="term" value="P:regulation of pH"/>
    <property type="evidence" value="ECO:0007669"/>
    <property type="project" value="InterPro"/>
</dbReference>
<dbReference type="Gene3D" id="3.40.30.10">
    <property type="entry name" value="Glutaredoxin"/>
    <property type="match status" value="1"/>
</dbReference>
<dbReference type="Gene3D" id="1.20.1530.10">
    <property type="entry name" value="Na+/H+ antiporter like domain"/>
    <property type="match status" value="1"/>
</dbReference>
<dbReference type="HAMAP" id="MF_01844">
    <property type="entry name" value="NhaA"/>
    <property type="match status" value="1"/>
</dbReference>
<dbReference type="InterPro" id="IPR023171">
    <property type="entry name" value="Na/H_antiporter_dom_sf"/>
</dbReference>
<dbReference type="InterPro" id="IPR004670">
    <property type="entry name" value="NhaA"/>
</dbReference>
<dbReference type="InterPro" id="IPR012336">
    <property type="entry name" value="Thioredoxin-like_fold"/>
</dbReference>
<dbReference type="InterPro" id="IPR036249">
    <property type="entry name" value="Thioredoxin-like_sf"/>
</dbReference>
<dbReference type="InterPro" id="IPR013766">
    <property type="entry name" value="Thioredoxin_domain"/>
</dbReference>
<dbReference type="NCBIfam" id="TIGR00773">
    <property type="entry name" value="NhaA"/>
    <property type="match status" value="1"/>
</dbReference>
<dbReference type="PANTHER" id="PTHR30341:SF0">
    <property type="entry name" value="NA(+)_H(+) ANTIPORTER NHAA"/>
    <property type="match status" value="1"/>
</dbReference>
<dbReference type="PANTHER" id="PTHR30341">
    <property type="entry name" value="SODIUM ION/PROTON ANTIPORTER NHAA-RELATED"/>
    <property type="match status" value="1"/>
</dbReference>
<dbReference type="Pfam" id="PF06965">
    <property type="entry name" value="Na_H_antiport_1"/>
    <property type="match status" value="1"/>
</dbReference>
<dbReference type="Pfam" id="PF13462">
    <property type="entry name" value="Thioredoxin_4"/>
    <property type="match status" value="1"/>
</dbReference>
<dbReference type="SUPFAM" id="SSF52833">
    <property type="entry name" value="Thioredoxin-like"/>
    <property type="match status" value="1"/>
</dbReference>
<dbReference type="PROSITE" id="PS51352">
    <property type="entry name" value="THIOREDOXIN_2"/>
    <property type="match status" value="1"/>
</dbReference>
<proteinExistence type="inferred from homology"/>
<comment type="function">
    <text evidence="1">Na(+)/H(+) antiporter that extrudes sodium in exchange for external protons.</text>
</comment>
<comment type="catalytic activity">
    <reaction evidence="1">
        <text>Na(+)(in) + 2 H(+)(out) = Na(+)(out) + 2 H(+)(in)</text>
        <dbReference type="Rhea" id="RHEA:29251"/>
        <dbReference type="ChEBI" id="CHEBI:15378"/>
        <dbReference type="ChEBI" id="CHEBI:29101"/>
    </reaction>
    <physiologicalReaction direction="left-to-right" evidence="1">
        <dbReference type="Rhea" id="RHEA:29252"/>
    </physiologicalReaction>
</comment>
<comment type="subcellular location">
    <subcellularLocation>
        <location evidence="1">Cell membrane</location>
        <topology evidence="1">Multi-pass membrane protein</topology>
    </subcellularLocation>
</comment>
<comment type="similarity">
    <text evidence="3">In the N-terminal section; belongs to the NhaA Na(+)/H(+) (TC 2.A.33) antiporter family.</text>
</comment>